<sequence>MYTPVILAIDEGTTNAKAIAVDERGRILAKAAVALQVTHPQPGRSEQDAMAIWRAVCQAAEVCLSSLHRAQVVGVAISNQRESVLIWDRQTGKPMTPLVSWQDRRAEKFCQALQGSAEARLIESRTGLQVDPLFPAAKLHAMLAELPNGVARAMQGELCIGTVDCWLNWQFSGGRAFSTDYSNAARTQLFNIHRGCWDEDLLALFGIPSVCLPAVTPSSALHGHTGVTGISGLAACVPIVALIGDSHAALYGQGITQSGEIKATYGTGSSLMTTINTPHLHATGLSTTIAWHDGELRYALEGNITHTGSGFAWIGQMLGVPSVTQLTELALSAESNQGVFFVPALSGLGAPYWDVQARGLLCGLCDATTPAIIARAGLEAIAYQVADVFFAMEQVSQAALPALRVDGGATQNRWLMQFQADLLQRPLIRNHNAEVSALGAAYLGGKMLGWWEHNEQIAALPREVEVIEPSATNHAILESYQQWRTAVARARLRPEA</sequence>
<proteinExistence type="evidence at protein level"/>
<accession>Q6D5T8</accession>
<reference key="1">
    <citation type="journal article" date="2004" name="Proc. Natl. Acad. Sci. U.S.A.">
        <title>Genome sequence of the enterobacterial phytopathogen Erwinia carotovora subsp. atroseptica and characterization of virulence factors.</title>
        <authorList>
            <person name="Bell K.S."/>
            <person name="Sebaihia M."/>
            <person name="Pritchard L."/>
            <person name="Holden M.T.G."/>
            <person name="Hyman L.J."/>
            <person name="Holeva M.C."/>
            <person name="Thomson N.R."/>
            <person name="Bentley S.D."/>
            <person name="Churcher L.J.C."/>
            <person name="Mungall K."/>
            <person name="Atkin R."/>
            <person name="Bason N."/>
            <person name="Brooks K."/>
            <person name="Chillingworth T."/>
            <person name="Clark K."/>
            <person name="Doggett J."/>
            <person name="Fraser A."/>
            <person name="Hance Z."/>
            <person name="Hauser H."/>
            <person name="Jagels K."/>
            <person name="Moule S."/>
            <person name="Norbertczak H."/>
            <person name="Ormond D."/>
            <person name="Price C."/>
            <person name="Quail M.A."/>
            <person name="Sanders M."/>
            <person name="Walker D."/>
            <person name="Whitehead S."/>
            <person name="Salmond G.P.C."/>
            <person name="Birch P.R.J."/>
            <person name="Parkhill J."/>
            <person name="Toth I.K."/>
        </authorList>
    </citation>
    <scope>NUCLEOTIDE SEQUENCE [LARGE SCALE GENOMIC DNA]</scope>
    <source>
        <strain>SCRI 1043 / ATCC BAA-672</strain>
    </source>
</reference>
<reference key="2">
    <citation type="journal article" date="2018" name="Nat. Chem. Biol.">
        <title>Functional assignment of multiple catabolic pathways for D-apiose.</title>
        <authorList>
            <person name="Carter M.S."/>
            <person name="Zhang X."/>
            <person name="Huang H."/>
            <person name="Bouvier J.T."/>
            <person name="Francisco B.S."/>
            <person name="Vetting M.W."/>
            <person name="Al-Obaidi N."/>
            <person name="Bonanno J.B."/>
            <person name="Ghosh A."/>
            <person name="Zallot R.G."/>
            <person name="Andersen H.M."/>
            <person name="Almo S.C."/>
            <person name="Gerlt J.A."/>
        </authorList>
    </citation>
    <scope>FUNCTION</scope>
    <scope>CATALYTIC ACTIVITY</scope>
    <scope>PATHWAY</scope>
</reference>
<organism>
    <name type="scientific">Pectobacterium atrosepticum (strain SCRI 1043 / ATCC BAA-672)</name>
    <name type="common">Erwinia carotovora subsp. atroseptica</name>
    <dbReference type="NCBI Taxonomy" id="218491"/>
    <lineage>
        <taxon>Bacteria</taxon>
        <taxon>Pseudomonadati</taxon>
        <taxon>Pseudomonadota</taxon>
        <taxon>Gammaproteobacteria</taxon>
        <taxon>Enterobacterales</taxon>
        <taxon>Pectobacteriaceae</taxon>
        <taxon>Pectobacterium</taxon>
    </lineage>
</organism>
<evidence type="ECO:0000250" key="1">
    <source>
        <dbReference type="UniProtKB" id="P0A6F3"/>
    </source>
</evidence>
<evidence type="ECO:0000269" key="2">
    <source>
    </source>
</evidence>
<evidence type="ECO:0000303" key="3">
    <source>
    </source>
</evidence>
<evidence type="ECO:0000305" key="4"/>
<evidence type="ECO:0000312" key="5">
    <source>
        <dbReference type="EMBL" id="CAG74854.1"/>
    </source>
</evidence>
<name>APLK_PECAS</name>
<gene>
    <name evidence="3" type="primary">aplK</name>
    <name evidence="5" type="ordered locus">ECA1952</name>
</gene>
<feature type="chain" id="PRO_0000446024" description="Apulose kinase">
    <location>
        <begin position="1"/>
        <end position="496"/>
    </location>
</feature>
<feature type="binding site" evidence="1">
    <location>
        <begin position="13"/>
        <end position="15"/>
    </location>
    <ligand>
        <name>ATP</name>
        <dbReference type="ChEBI" id="CHEBI:30616"/>
    </ligand>
</feature>
<feature type="binding site" evidence="1">
    <location>
        <position position="267"/>
    </location>
    <ligand>
        <name>ATP</name>
        <dbReference type="ChEBI" id="CHEBI:30616"/>
    </ligand>
</feature>
<feature type="binding site" evidence="1">
    <location>
        <position position="308"/>
    </location>
    <ligand>
        <name>ATP</name>
        <dbReference type="ChEBI" id="CHEBI:30616"/>
    </ligand>
</feature>
<feature type="binding site" evidence="1">
    <location>
        <begin position="408"/>
        <end position="412"/>
    </location>
    <ligand>
        <name>ATP</name>
        <dbReference type="ChEBI" id="CHEBI:30616"/>
    </ligand>
</feature>
<dbReference type="EC" id="2.7.1.233" evidence="2"/>
<dbReference type="EMBL" id="BX950851">
    <property type="protein sequence ID" value="CAG74854.1"/>
    <property type="molecule type" value="Genomic_DNA"/>
</dbReference>
<dbReference type="RefSeq" id="WP_011093516.1">
    <property type="nucleotide sequence ID" value="NC_004547.2"/>
</dbReference>
<dbReference type="SMR" id="Q6D5T8"/>
<dbReference type="STRING" id="218491.ECA1952"/>
<dbReference type="KEGG" id="eca:ECA1952"/>
<dbReference type="PATRIC" id="fig|218491.5.peg.1985"/>
<dbReference type="eggNOG" id="COG0554">
    <property type="taxonomic scope" value="Bacteria"/>
</dbReference>
<dbReference type="HOGENOM" id="CLU_009281_2_3_6"/>
<dbReference type="OrthoDB" id="9805576at2"/>
<dbReference type="BioCyc" id="MetaCyc:MONOMER-20955"/>
<dbReference type="BRENDA" id="2.7.1.233">
    <property type="organism ID" value="9330"/>
</dbReference>
<dbReference type="Proteomes" id="UP000007966">
    <property type="component" value="Chromosome"/>
</dbReference>
<dbReference type="GO" id="GO:0005829">
    <property type="term" value="C:cytosol"/>
    <property type="evidence" value="ECO:0007669"/>
    <property type="project" value="TreeGrafter"/>
</dbReference>
<dbReference type="GO" id="GO:0005524">
    <property type="term" value="F:ATP binding"/>
    <property type="evidence" value="ECO:0007669"/>
    <property type="project" value="UniProtKB-KW"/>
</dbReference>
<dbReference type="GO" id="GO:0004370">
    <property type="term" value="F:glycerol kinase activity"/>
    <property type="evidence" value="ECO:0007669"/>
    <property type="project" value="TreeGrafter"/>
</dbReference>
<dbReference type="GO" id="GO:0019563">
    <property type="term" value="P:glycerol catabolic process"/>
    <property type="evidence" value="ECO:0007669"/>
    <property type="project" value="TreeGrafter"/>
</dbReference>
<dbReference type="CDD" id="cd07769">
    <property type="entry name" value="ASKHA_NBD_FGGY_GK"/>
    <property type="match status" value="1"/>
</dbReference>
<dbReference type="Gene3D" id="3.30.420.40">
    <property type="match status" value="2"/>
</dbReference>
<dbReference type="InterPro" id="IPR043129">
    <property type="entry name" value="ATPase_NBD"/>
</dbReference>
<dbReference type="InterPro" id="IPR000577">
    <property type="entry name" value="Carb_kinase_FGGY"/>
</dbReference>
<dbReference type="InterPro" id="IPR018485">
    <property type="entry name" value="FGGY_C"/>
</dbReference>
<dbReference type="InterPro" id="IPR018484">
    <property type="entry name" value="FGGY_N"/>
</dbReference>
<dbReference type="PANTHER" id="PTHR10196:SF69">
    <property type="entry name" value="GLYCEROL KINASE"/>
    <property type="match status" value="1"/>
</dbReference>
<dbReference type="PANTHER" id="PTHR10196">
    <property type="entry name" value="SUGAR KINASE"/>
    <property type="match status" value="1"/>
</dbReference>
<dbReference type="Pfam" id="PF02782">
    <property type="entry name" value="FGGY_C"/>
    <property type="match status" value="1"/>
</dbReference>
<dbReference type="Pfam" id="PF00370">
    <property type="entry name" value="FGGY_N"/>
    <property type="match status" value="1"/>
</dbReference>
<dbReference type="PIRSF" id="PIRSF000538">
    <property type="entry name" value="GlpK"/>
    <property type="match status" value="1"/>
</dbReference>
<dbReference type="SUPFAM" id="SSF53067">
    <property type="entry name" value="Actin-like ATPase domain"/>
    <property type="match status" value="2"/>
</dbReference>
<keyword id="KW-0067">ATP-binding</keyword>
<keyword id="KW-0119">Carbohydrate metabolism</keyword>
<keyword id="KW-0418">Kinase</keyword>
<keyword id="KW-0547">Nucleotide-binding</keyword>
<keyword id="KW-1185">Reference proteome</keyword>
<keyword id="KW-0808">Transferase</keyword>
<protein>
    <recommendedName>
        <fullName evidence="3">Apulose kinase</fullName>
        <ecNumber evidence="2">2.7.1.233</ecNumber>
    </recommendedName>
</protein>
<comment type="function">
    <text evidence="2">Involved in catabolism of D-apiose. Catalyzes phosphorylation of apulose to form apulose 4-phosphate.</text>
</comment>
<comment type="catalytic activity">
    <reaction evidence="2">
        <text>apulose + ATP = apulose 4-phosphate + ADP + H(+)</text>
        <dbReference type="Rhea" id="RHEA:57020"/>
        <dbReference type="ChEBI" id="CHEBI:15378"/>
        <dbReference type="ChEBI" id="CHEBI:30616"/>
        <dbReference type="ChEBI" id="CHEBI:141348"/>
        <dbReference type="ChEBI" id="CHEBI:141351"/>
        <dbReference type="ChEBI" id="CHEBI:456216"/>
        <dbReference type="EC" id="2.7.1.233"/>
    </reaction>
</comment>
<comment type="pathway">
    <text evidence="2">Carbohydrate metabolism.</text>
</comment>
<comment type="similarity">
    <text evidence="4">Belongs to the FGGY kinase family.</text>
</comment>